<organism>
    <name type="scientific">Acidiphilium cryptum (strain JF-5)</name>
    <dbReference type="NCBI Taxonomy" id="349163"/>
    <lineage>
        <taxon>Bacteria</taxon>
        <taxon>Pseudomonadati</taxon>
        <taxon>Pseudomonadota</taxon>
        <taxon>Alphaproteobacteria</taxon>
        <taxon>Acetobacterales</taxon>
        <taxon>Acidocellaceae</taxon>
        <taxon>Acidiphilium</taxon>
    </lineage>
</organism>
<comment type="function">
    <text evidence="1">Catalyzes the condensation of (S)-aspartate-beta-semialdehyde [(S)-ASA] and pyruvate to 4-hydroxy-tetrahydrodipicolinate (HTPA).</text>
</comment>
<comment type="catalytic activity">
    <reaction evidence="1">
        <text>L-aspartate 4-semialdehyde + pyruvate = (2S,4S)-4-hydroxy-2,3,4,5-tetrahydrodipicolinate + H2O + H(+)</text>
        <dbReference type="Rhea" id="RHEA:34171"/>
        <dbReference type="ChEBI" id="CHEBI:15361"/>
        <dbReference type="ChEBI" id="CHEBI:15377"/>
        <dbReference type="ChEBI" id="CHEBI:15378"/>
        <dbReference type="ChEBI" id="CHEBI:67139"/>
        <dbReference type="ChEBI" id="CHEBI:537519"/>
        <dbReference type="EC" id="4.3.3.7"/>
    </reaction>
</comment>
<comment type="pathway">
    <text evidence="1">Amino-acid biosynthesis; L-lysine biosynthesis via DAP pathway; (S)-tetrahydrodipicolinate from L-aspartate: step 3/4.</text>
</comment>
<comment type="subunit">
    <text evidence="1">Homotetramer; dimer of dimers.</text>
</comment>
<comment type="subcellular location">
    <subcellularLocation>
        <location evidence="1">Cytoplasm</location>
    </subcellularLocation>
</comment>
<comment type="similarity">
    <text evidence="1">Belongs to the DapA family.</text>
</comment>
<comment type="caution">
    <text evidence="2">Was originally thought to be a dihydrodipicolinate synthase (DHDPS), catalyzing the condensation of (S)-aspartate-beta-semialdehyde [(S)-ASA] and pyruvate to dihydrodipicolinate (DHDP). However, it was shown in E.coli that the product of the enzymatic reaction is not dihydrodipicolinate but in fact (4S)-4-hydroxy-2,3,4,5-tetrahydro-(2S)-dipicolinic acid (HTPA), and that the consecutive dehydration reaction leading to DHDP is not spontaneous but catalyzed by DapB.</text>
</comment>
<accession>A5FZS7</accession>
<proteinExistence type="inferred from homology"/>
<dbReference type="EC" id="4.3.3.7" evidence="1"/>
<dbReference type="EMBL" id="CP000697">
    <property type="protein sequence ID" value="ABQ31109.1"/>
    <property type="molecule type" value="Genomic_DNA"/>
</dbReference>
<dbReference type="RefSeq" id="WP_007423390.1">
    <property type="nucleotide sequence ID" value="NC_009484.1"/>
</dbReference>
<dbReference type="SMR" id="A5FZS7"/>
<dbReference type="STRING" id="349163.Acry_1908"/>
<dbReference type="KEGG" id="acr:Acry_1908"/>
<dbReference type="eggNOG" id="COG0329">
    <property type="taxonomic scope" value="Bacteria"/>
</dbReference>
<dbReference type="HOGENOM" id="CLU_049343_7_1_5"/>
<dbReference type="UniPathway" id="UPA00034">
    <property type="reaction ID" value="UER00017"/>
</dbReference>
<dbReference type="Proteomes" id="UP000000245">
    <property type="component" value="Chromosome"/>
</dbReference>
<dbReference type="GO" id="GO:0005829">
    <property type="term" value="C:cytosol"/>
    <property type="evidence" value="ECO:0007669"/>
    <property type="project" value="TreeGrafter"/>
</dbReference>
<dbReference type="GO" id="GO:0008840">
    <property type="term" value="F:4-hydroxy-tetrahydrodipicolinate synthase activity"/>
    <property type="evidence" value="ECO:0007669"/>
    <property type="project" value="UniProtKB-UniRule"/>
</dbReference>
<dbReference type="GO" id="GO:0019877">
    <property type="term" value="P:diaminopimelate biosynthetic process"/>
    <property type="evidence" value="ECO:0007669"/>
    <property type="project" value="UniProtKB-UniRule"/>
</dbReference>
<dbReference type="GO" id="GO:0009089">
    <property type="term" value="P:lysine biosynthetic process via diaminopimelate"/>
    <property type="evidence" value="ECO:0007669"/>
    <property type="project" value="UniProtKB-UniRule"/>
</dbReference>
<dbReference type="CDD" id="cd00950">
    <property type="entry name" value="DHDPS"/>
    <property type="match status" value="1"/>
</dbReference>
<dbReference type="Gene3D" id="3.20.20.70">
    <property type="entry name" value="Aldolase class I"/>
    <property type="match status" value="1"/>
</dbReference>
<dbReference type="HAMAP" id="MF_00418">
    <property type="entry name" value="DapA"/>
    <property type="match status" value="1"/>
</dbReference>
<dbReference type="InterPro" id="IPR013785">
    <property type="entry name" value="Aldolase_TIM"/>
</dbReference>
<dbReference type="InterPro" id="IPR005263">
    <property type="entry name" value="DapA"/>
</dbReference>
<dbReference type="InterPro" id="IPR002220">
    <property type="entry name" value="DapA-like"/>
</dbReference>
<dbReference type="InterPro" id="IPR020625">
    <property type="entry name" value="Schiff_base-form_aldolases_AS"/>
</dbReference>
<dbReference type="InterPro" id="IPR020624">
    <property type="entry name" value="Schiff_base-form_aldolases_CS"/>
</dbReference>
<dbReference type="NCBIfam" id="TIGR00674">
    <property type="entry name" value="dapA"/>
    <property type="match status" value="1"/>
</dbReference>
<dbReference type="PANTHER" id="PTHR12128:SF66">
    <property type="entry name" value="4-HYDROXY-2-OXOGLUTARATE ALDOLASE, MITOCHONDRIAL"/>
    <property type="match status" value="1"/>
</dbReference>
<dbReference type="PANTHER" id="PTHR12128">
    <property type="entry name" value="DIHYDRODIPICOLINATE SYNTHASE"/>
    <property type="match status" value="1"/>
</dbReference>
<dbReference type="Pfam" id="PF00701">
    <property type="entry name" value="DHDPS"/>
    <property type="match status" value="1"/>
</dbReference>
<dbReference type="PIRSF" id="PIRSF001365">
    <property type="entry name" value="DHDPS"/>
    <property type="match status" value="1"/>
</dbReference>
<dbReference type="PRINTS" id="PR00146">
    <property type="entry name" value="DHPICSNTHASE"/>
</dbReference>
<dbReference type="SMART" id="SM01130">
    <property type="entry name" value="DHDPS"/>
    <property type="match status" value="1"/>
</dbReference>
<dbReference type="SUPFAM" id="SSF51569">
    <property type="entry name" value="Aldolase"/>
    <property type="match status" value="1"/>
</dbReference>
<dbReference type="PROSITE" id="PS00665">
    <property type="entry name" value="DHDPS_1"/>
    <property type="match status" value="1"/>
</dbReference>
<dbReference type="PROSITE" id="PS00666">
    <property type="entry name" value="DHDPS_2"/>
    <property type="match status" value="1"/>
</dbReference>
<protein>
    <recommendedName>
        <fullName evidence="1">4-hydroxy-tetrahydrodipicolinate synthase</fullName>
        <shortName evidence="1">HTPA synthase</shortName>
        <ecNumber evidence="1">4.3.3.7</ecNumber>
    </recommendedName>
</protein>
<feature type="chain" id="PRO_1000050159" description="4-hydroxy-tetrahydrodipicolinate synthase">
    <location>
        <begin position="1"/>
        <end position="292"/>
    </location>
</feature>
<feature type="active site" description="Proton donor/acceptor" evidence="1">
    <location>
        <position position="133"/>
    </location>
</feature>
<feature type="active site" description="Schiff-base intermediate with substrate" evidence="1">
    <location>
        <position position="161"/>
    </location>
</feature>
<feature type="binding site" evidence="1">
    <location>
        <position position="45"/>
    </location>
    <ligand>
        <name>pyruvate</name>
        <dbReference type="ChEBI" id="CHEBI:15361"/>
    </ligand>
</feature>
<feature type="binding site" evidence="1">
    <location>
        <position position="203"/>
    </location>
    <ligand>
        <name>pyruvate</name>
        <dbReference type="ChEBI" id="CHEBI:15361"/>
    </ligand>
</feature>
<feature type="site" description="Part of a proton relay during catalysis" evidence="1">
    <location>
        <position position="44"/>
    </location>
</feature>
<feature type="site" description="Part of a proton relay during catalysis" evidence="1">
    <location>
        <position position="107"/>
    </location>
</feature>
<sequence>MFHGSLVALVTPMHEDGRIDEAALERFIEWQIAEGTNGLVPVGTTGESPTLSHDEHKRVVEITVEVARKRVPVIAGAGSNATREAIGLAKHAESVGADGVLVVTPYYNKPTQDGLLRHFTAVADAIGIPLIIYNIPPRSVIDMSVATMARLAQHPNIVGVKDATANLTRPLHTTAACGASFCQLSGEDHTALAFLAAGGVGCISVTANIAPRLCAEMQAAWRAGDLKTAMAIQSRLLPLHDAMFAESNPAPAKYAASLLGFGSEFCRLPLAPLAEATKAQMRAAMTGLGLLA</sequence>
<keyword id="KW-0028">Amino-acid biosynthesis</keyword>
<keyword id="KW-0963">Cytoplasm</keyword>
<keyword id="KW-0220">Diaminopimelate biosynthesis</keyword>
<keyword id="KW-0456">Lyase</keyword>
<keyword id="KW-0457">Lysine biosynthesis</keyword>
<keyword id="KW-1185">Reference proteome</keyword>
<keyword id="KW-0704">Schiff base</keyword>
<reference key="1">
    <citation type="submission" date="2007-05" db="EMBL/GenBank/DDBJ databases">
        <title>Complete sequence of chromosome of Acidiphilium cryptum JF-5.</title>
        <authorList>
            <consortium name="US DOE Joint Genome Institute"/>
            <person name="Copeland A."/>
            <person name="Lucas S."/>
            <person name="Lapidus A."/>
            <person name="Barry K."/>
            <person name="Detter J.C."/>
            <person name="Glavina del Rio T."/>
            <person name="Hammon N."/>
            <person name="Israni S."/>
            <person name="Dalin E."/>
            <person name="Tice H."/>
            <person name="Pitluck S."/>
            <person name="Sims D."/>
            <person name="Brettin T."/>
            <person name="Bruce D."/>
            <person name="Han C."/>
            <person name="Schmutz J."/>
            <person name="Larimer F."/>
            <person name="Land M."/>
            <person name="Hauser L."/>
            <person name="Kyrpides N."/>
            <person name="Kim E."/>
            <person name="Magnuson T."/>
            <person name="Richardson P."/>
        </authorList>
    </citation>
    <scope>NUCLEOTIDE SEQUENCE [LARGE SCALE GENOMIC DNA]</scope>
    <source>
        <strain>JF-5</strain>
    </source>
</reference>
<name>DAPA_ACICJ</name>
<gene>
    <name evidence="1" type="primary">dapA</name>
    <name type="ordered locus">Acry_1908</name>
</gene>
<evidence type="ECO:0000255" key="1">
    <source>
        <dbReference type="HAMAP-Rule" id="MF_00418"/>
    </source>
</evidence>
<evidence type="ECO:0000305" key="2"/>